<feature type="chain" id="PRO_0000099270" description="Virion membrane protein A21">
    <location>
        <begin position="1"/>
        <end position="117"/>
    </location>
</feature>
<feature type="transmembrane region" description="Helical; Signal-anchor for type III membrane protein" evidence="2">
    <location>
        <begin position="1"/>
        <end position="21"/>
    </location>
</feature>
<feature type="topological domain" description="Virion surface" evidence="2">
    <location>
        <begin position="22"/>
        <end position="117"/>
    </location>
</feature>
<comment type="function">
    <text evidence="1">Envelope protein part of the entry-fusion complex responsible for the virus membrane fusion with host cell membrane during virus entry.</text>
</comment>
<comment type="subunit">
    <text evidence="1">Envelope protein part of a stable entry-fusion complex (EFC) which is at least composed of proteins A16, A21, A28, G3, G9, H2, J5, and L5. Formation of the viral membrane is necessary for the assembly of the complex (By similarity).</text>
</comment>
<comment type="subcellular location">
    <subcellularLocation>
        <location evidence="3">Virion membrane</location>
        <topology evidence="3">Single-pass type III membrane protein</topology>
    </subcellularLocation>
    <text evidence="1">Component of the mature virion (MV) membrane. The mature virion is located in the cytoplasm of infected cells and is probably released by cell lysis (By similarity).</text>
</comment>
<comment type="PTM">
    <text evidence="1">Contains two intramolecular disulfide bonds. They are created by the viral disulfide bond formation pathway, a poxvirus-specific pathway that operates on the cytoplasmic side of the MV membranes (By similarity).</text>
</comment>
<comment type="similarity">
    <text evidence="3">Belongs to the chordopoxvirinae A21 family.</text>
</comment>
<reference key="1">
    <citation type="journal article" date="1998" name="Virology">
        <title>The complete genomic sequence of the modified vaccinia Ankara strain: comparison with other orthopoxviruses.</title>
        <authorList>
            <person name="Antoine G."/>
            <person name="Scheiflinger F."/>
            <person name="Dorner F."/>
            <person name="Falkner F.G."/>
        </authorList>
    </citation>
    <scope>NUCLEOTIDE SEQUENCE [LARGE SCALE GENOMIC DNA]</scope>
</reference>
<reference key="2">
    <citation type="submission" date="2004-04" db="EMBL/GenBank/DDBJ databases">
        <authorList>
            <person name="Esposito J.J."/>
            <person name="Frace M."/>
            <person name="Sammons S.A."/>
            <person name="Olsen-Rasmussen M.S."/>
            <person name="Osborne J."/>
            <person name="Khristova M."/>
            <person name="Wohlhueter R.M."/>
        </authorList>
    </citation>
    <scope>NUCLEOTIDE SEQUENCE [LARGE SCALE GENOMIC DNA]</scope>
    <source>
        <strain>Isolate Acambis 3000</strain>
    </source>
</reference>
<keyword id="KW-0002">3D-structure</keyword>
<keyword id="KW-1015">Disulfide bond</keyword>
<keyword id="KW-1168">Fusion of virus membrane with host membrane</keyword>
<keyword id="KW-0472">Membrane</keyword>
<keyword id="KW-0735">Signal-anchor</keyword>
<keyword id="KW-0812">Transmembrane</keyword>
<keyword id="KW-1133">Transmembrane helix</keyword>
<keyword id="KW-0261">Viral envelope protein</keyword>
<keyword id="KW-1162">Viral penetration into host cytoplasm</keyword>
<keyword id="KW-0946">Virion</keyword>
<keyword id="KW-1160">Virus entry into host cell</keyword>
<sequence length="117" mass="13645">MITLFLILCYFILIFNIIVPAISEKMRRERAAYVNYKRLNKNFICVDDRLFSYNFTTSGIKAKVAVDNKNVPIPCSKINEVNNNKDVDTLYCDKDRDDIPGFARSCYRAYSDLFFTT</sequence>
<dbReference type="EMBL" id="U94848">
    <property type="protein sequence ID" value="AAB96470.1"/>
    <property type="molecule type" value="Genomic_DNA"/>
</dbReference>
<dbReference type="EMBL" id="AY603355">
    <property type="protein sequence ID" value="AAT10530.1"/>
    <property type="molecule type" value="Genomic_DNA"/>
</dbReference>
<dbReference type="PDB" id="8U0R">
    <property type="method" value="X-ray"/>
    <property type="resolution" value="2.30 A"/>
    <property type="chains" value="A/B/C/D/E/F=24-117"/>
</dbReference>
<dbReference type="PDBsum" id="8U0R"/>
<dbReference type="SMR" id="P68711"/>
<dbReference type="DNASU" id="3707670"/>
<dbReference type="KEGG" id="vg:3707670"/>
<dbReference type="Proteomes" id="UP000159908">
    <property type="component" value="Segment"/>
</dbReference>
<dbReference type="Proteomes" id="UP000172909">
    <property type="component" value="Segment"/>
</dbReference>
<dbReference type="GO" id="GO:0016020">
    <property type="term" value="C:membrane"/>
    <property type="evidence" value="ECO:0007669"/>
    <property type="project" value="UniProtKB-KW"/>
</dbReference>
<dbReference type="GO" id="GO:0019031">
    <property type="term" value="C:viral envelope"/>
    <property type="evidence" value="ECO:0007669"/>
    <property type="project" value="UniProtKB-KW"/>
</dbReference>
<dbReference type="GO" id="GO:0055036">
    <property type="term" value="C:virion membrane"/>
    <property type="evidence" value="ECO:0007669"/>
    <property type="project" value="UniProtKB-SubCell"/>
</dbReference>
<dbReference type="GO" id="GO:0039663">
    <property type="term" value="P:membrane fusion involved in viral entry into host cell"/>
    <property type="evidence" value="ECO:0007669"/>
    <property type="project" value="UniProtKB-KW"/>
</dbReference>
<dbReference type="GO" id="GO:0046718">
    <property type="term" value="P:symbiont entry into host cell"/>
    <property type="evidence" value="ECO:0007669"/>
    <property type="project" value="UniProtKB-KW"/>
</dbReference>
<dbReference type="InterPro" id="IPR007987">
    <property type="entry name" value="Poxvirus_A21"/>
</dbReference>
<dbReference type="Pfam" id="PF05323">
    <property type="entry name" value="Pox_A21"/>
    <property type="match status" value="1"/>
</dbReference>
<gene>
    <name type="ordered locus">MVA131L</name>
    <name type="ordered locus">ACAM3000_MVA_131</name>
</gene>
<name>A21_VACCA</name>
<accession>P68711</accession>
<accession>Q76ZP8</accession>
<proteinExistence type="evidence at protein level"/>
<evidence type="ECO:0000250" key="1"/>
<evidence type="ECO:0000255" key="2"/>
<evidence type="ECO:0000305" key="3"/>
<organism>
    <name type="scientific">Vaccinia virus (strain Ankara)</name>
    <name type="common">VACV</name>
    <dbReference type="NCBI Taxonomy" id="126794"/>
    <lineage>
        <taxon>Viruses</taxon>
        <taxon>Varidnaviria</taxon>
        <taxon>Bamfordvirae</taxon>
        <taxon>Nucleocytoviricota</taxon>
        <taxon>Pokkesviricetes</taxon>
        <taxon>Chitovirales</taxon>
        <taxon>Poxviridae</taxon>
        <taxon>Chordopoxvirinae</taxon>
        <taxon>Orthopoxvirus</taxon>
        <taxon>Vaccinia virus</taxon>
    </lineage>
</organism>
<protein>
    <recommendedName>
        <fullName>Virion membrane protein A21</fullName>
    </recommendedName>
</protein>
<organismHost>
    <name type="scientific">Homo sapiens</name>
    <name type="common">Human</name>
    <dbReference type="NCBI Taxonomy" id="9606"/>
</organismHost>